<accession>Q6G6W1</accession>
<sequence length="221" mass="24626">MALVVEDIVKNFGEGLSETKVLKGINFEVEQGEFVILNGASGSGKTTLLTILGGLLSQTSGTVLYNDAPLFDKQHRPSDLRLEDIGFIFQSSHLVPYLKVIEQLTLVGQEAGMTKQQSSTRAIQLLKNIGLEDRLNVYPHQLSGGEKQRVAIMRAFMNNPKIILADEPTASLDADRATKVVEMIRQQIKEQQMIGIMITHDRRLFEYADRVIELEDGKITD</sequence>
<protein>
    <recommendedName>
        <fullName>Putative hemin import ATP-binding protein HrtA</fullName>
        <ecNumber>7.6.2.-</ecNumber>
    </recommendedName>
</protein>
<proteinExistence type="inferred from homology"/>
<evidence type="ECO:0000250" key="1"/>
<evidence type="ECO:0000255" key="2">
    <source>
        <dbReference type="PROSITE-ProRule" id="PRU00434"/>
    </source>
</evidence>
<evidence type="ECO:0000305" key="3"/>
<name>HRTA_STAAS</name>
<comment type="function">
    <text evidence="1">Part of the ABC transporter complex hrt involved in hemin import. Responsible for energy coupling to the transport system (By similarity).</text>
</comment>
<comment type="subunit">
    <text evidence="1">The complex is composed of two ATP-binding proteins (HrtA), two transmembrane proteins (HrtB) and a solute-binding protein.</text>
</comment>
<comment type="subcellular location">
    <subcellularLocation>
        <location evidence="3">Cell membrane</location>
        <topology evidence="3">Peripheral membrane protein</topology>
    </subcellularLocation>
</comment>
<comment type="similarity">
    <text evidence="3">Belongs to the ABC transporter superfamily. HrtA family.</text>
</comment>
<reference key="1">
    <citation type="journal article" date="2004" name="Proc. Natl. Acad. Sci. U.S.A.">
        <title>Complete genomes of two clinical Staphylococcus aureus strains: evidence for the rapid evolution of virulence and drug resistance.</title>
        <authorList>
            <person name="Holden M.T.G."/>
            <person name="Feil E.J."/>
            <person name="Lindsay J.A."/>
            <person name="Peacock S.J."/>
            <person name="Day N.P.J."/>
            <person name="Enright M.C."/>
            <person name="Foster T.J."/>
            <person name="Moore C.E."/>
            <person name="Hurst L."/>
            <person name="Atkin R."/>
            <person name="Barron A."/>
            <person name="Bason N."/>
            <person name="Bentley S.D."/>
            <person name="Chillingworth C."/>
            <person name="Chillingworth T."/>
            <person name="Churcher C."/>
            <person name="Clark L."/>
            <person name="Corton C."/>
            <person name="Cronin A."/>
            <person name="Doggett J."/>
            <person name="Dowd L."/>
            <person name="Feltwell T."/>
            <person name="Hance Z."/>
            <person name="Harris B."/>
            <person name="Hauser H."/>
            <person name="Holroyd S."/>
            <person name="Jagels K."/>
            <person name="James K.D."/>
            <person name="Lennard N."/>
            <person name="Line A."/>
            <person name="Mayes R."/>
            <person name="Moule S."/>
            <person name="Mungall K."/>
            <person name="Ormond D."/>
            <person name="Quail M.A."/>
            <person name="Rabbinowitsch E."/>
            <person name="Rutherford K.M."/>
            <person name="Sanders M."/>
            <person name="Sharp S."/>
            <person name="Simmonds M."/>
            <person name="Stevens K."/>
            <person name="Whitehead S."/>
            <person name="Barrell B.G."/>
            <person name="Spratt B.G."/>
            <person name="Parkhill J."/>
        </authorList>
    </citation>
    <scope>NUCLEOTIDE SEQUENCE [LARGE SCALE GENOMIC DNA]</scope>
    <source>
        <strain>MSSA476</strain>
    </source>
</reference>
<dbReference type="EC" id="7.6.2.-"/>
<dbReference type="EMBL" id="BX571857">
    <property type="protein sequence ID" value="CAG44063.1"/>
    <property type="molecule type" value="Genomic_DNA"/>
</dbReference>
<dbReference type="RefSeq" id="WP_001229911.1">
    <property type="nucleotide sequence ID" value="NC_002953.3"/>
</dbReference>
<dbReference type="SMR" id="Q6G6W1"/>
<dbReference type="KEGG" id="sas:SAS2250"/>
<dbReference type="HOGENOM" id="CLU_000604_1_22_9"/>
<dbReference type="GO" id="GO:0005886">
    <property type="term" value="C:plasma membrane"/>
    <property type="evidence" value="ECO:0007669"/>
    <property type="project" value="UniProtKB-SubCell"/>
</dbReference>
<dbReference type="GO" id="GO:0005524">
    <property type="term" value="F:ATP binding"/>
    <property type="evidence" value="ECO:0007669"/>
    <property type="project" value="UniProtKB-KW"/>
</dbReference>
<dbReference type="GO" id="GO:0016887">
    <property type="term" value="F:ATP hydrolysis activity"/>
    <property type="evidence" value="ECO:0007669"/>
    <property type="project" value="InterPro"/>
</dbReference>
<dbReference type="GO" id="GO:0022857">
    <property type="term" value="F:transmembrane transporter activity"/>
    <property type="evidence" value="ECO:0007669"/>
    <property type="project" value="TreeGrafter"/>
</dbReference>
<dbReference type="CDD" id="cd03255">
    <property type="entry name" value="ABC_MJ0796_LolCDE_FtsE"/>
    <property type="match status" value="1"/>
</dbReference>
<dbReference type="FunFam" id="3.40.50.300:FF:000032">
    <property type="entry name" value="Export ABC transporter ATP-binding protein"/>
    <property type="match status" value="1"/>
</dbReference>
<dbReference type="Gene3D" id="3.40.50.300">
    <property type="entry name" value="P-loop containing nucleotide triphosphate hydrolases"/>
    <property type="match status" value="1"/>
</dbReference>
<dbReference type="InterPro" id="IPR003593">
    <property type="entry name" value="AAA+_ATPase"/>
</dbReference>
<dbReference type="InterPro" id="IPR003439">
    <property type="entry name" value="ABC_transporter-like_ATP-bd"/>
</dbReference>
<dbReference type="InterPro" id="IPR015854">
    <property type="entry name" value="ABC_transpr_LolD-like"/>
</dbReference>
<dbReference type="InterPro" id="IPR017911">
    <property type="entry name" value="MacB-like_ATP-bd"/>
</dbReference>
<dbReference type="InterPro" id="IPR027417">
    <property type="entry name" value="P-loop_NTPase"/>
</dbReference>
<dbReference type="PANTHER" id="PTHR24220:SF666">
    <property type="entry name" value="HEMIN IMPORT ATP-BINDING PROTEIN HRTA-RELATED"/>
    <property type="match status" value="1"/>
</dbReference>
<dbReference type="PANTHER" id="PTHR24220">
    <property type="entry name" value="IMPORT ATP-BINDING PROTEIN"/>
    <property type="match status" value="1"/>
</dbReference>
<dbReference type="Pfam" id="PF00005">
    <property type="entry name" value="ABC_tran"/>
    <property type="match status" value="1"/>
</dbReference>
<dbReference type="SMART" id="SM00382">
    <property type="entry name" value="AAA"/>
    <property type="match status" value="1"/>
</dbReference>
<dbReference type="SUPFAM" id="SSF52540">
    <property type="entry name" value="P-loop containing nucleoside triphosphate hydrolases"/>
    <property type="match status" value="1"/>
</dbReference>
<dbReference type="PROSITE" id="PS50893">
    <property type="entry name" value="ABC_TRANSPORTER_2"/>
    <property type="match status" value="1"/>
</dbReference>
<gene>
    <name type="primary">hrtA</name>
    <name type="ordered locus">SAS2250</name>
</gene>
<feature type="chain" id="PRO_0000270131" description="Putative hemin import ATP-binding protein HrtA">
    <location>
        <begin position="1"/>
        <end position="221"/>
    </location>
</feature>
<feature type="domain" description="ABC transporter" evidence="2">
    <location>
        <begin position="3"/>
        <end position="221"/>
    </location>
</feature>
<feature type="binding site" evidence="2">
    <location>
        <begin position="39"/>
        <end position="46"/>
    </location>
    <ligand>
        <name>ATP</name>
        <dbReference type="ChEBI" id="CHEBI:30616"/>
    </ligand>
</feature>
<keyword id="KW-0067">ATP-binding</keyword>
<keyword id="KW-1003">Cell membrane</keyword>
<keyword id="KW-0472">Membrane</keyword>
<keyword id="KW-0547">Nucleotide-binding</keyword>
<keyword id="KW-1278">Translocase</keyword>
<keyword id="KW-0813">Transport</keyword>
<organism>
    <name type="scientific">Staphylococcus aureus (strain MSSA476)</name>
    <dbReference type="NCBI Taxonomy" id="282459"/>
    <lineage>
        <taxon>Bacteria</taxon>
        <taxon>Bacillati</taxon>
        <taxon>Bacillota</taxon>
        <taxon>Bacilli</taxon>
        <taxon>Bacillales</taxon>
        <taxon>Staphylococcaceae</taxon>
        <taxon>Staphylococcus</taxon>
    </lineage>
</organism>